<comment type="function">
    <text evidence="1">Formation of pseudouridine at positions 38, 39 and 40 in the anticodon stem and loop of transfer RNAs.</text>
</comment>
<comment type="catalytic activity">
    <reaction evidence="1">
        <text>uridine(38/39/40) in tRNA = pseudouridine(38/39/40) in tRNA</text>
        <dbReference type="Rhea" id="RHEA:22376"/>
        <dbReference type="Rhea" id="RHEA-COMP:10085"/>
        <dbReference type="Rhea" id="RHEA-COMP:10087"/>
        <dbReference type="ChEBI" id="CHEBI:65314"/>
        <dbReference type="ChEBI" id="CHEBI:65315"/>
        <dbReference type="EC" id="5.4.99.12"/>
    </reaction>
</comment>
<comment type="subunit">
    <text evidence="1">Homodimer.</text>
</comment>
<comment type="similarity">
    <text evidence="1">Belongs to the tRNA pseudouridine synthase TruA family.</text>
</comment>
<proteinExistence type="inferred from homology"/>
<reference key="1">
    <citation type="journal article" date="2011" name="PLoS Genet.">
        <title>The evolution of host specialization in the vertebrate gut symbiont Lactobacillus reuteri.</title>
        <authorList>
            <person name="Frese S.A."/>
            <person name="Benson A.K."/>
            <person name="Tannock G.W."/>
            <person name="Loach D.M."/>
            <person name="Kim J."/>
            <person name="Zhang M."/>
            <person name="Oh P.L."/>
            <person name="Heng N.C."/>
            <person name="Patil P.B."/>
            <person name="Juge N."/>
            <person name="Mackenzie D.A."/>
            <person name="Pearson B.M."/>
            <person name="Lapidus A."/>
            <person name="Dalin E."/>
            <person name="Tice H."/>
            <person name="Goltsman E."/>
            <person name="Land M."/>
            <person name="Hauser L."/>
            <person name="Ivanova N."/>
            <person name="Kyrpides N.C."/>
            <person name="Walter J."/>
        </authorList>
    </citation>
    <scope>NUCLEOTIDE SEQUENCE [LARGE SCALE GENOMIC DNA]</scope>
    <source>
        <strain>DSM 20016</strain>
    </source>
</reference>
<dbReference type="EC" id="5.4.99.12" evidence="1"/>
<dbReference type="EMBL" id="CP000705">
    <property type="protein sequence ID" value="ABQ83698.1"/>
    <property type="molecule type" value="Genomic_DNA"/>
</dbReference>
<dbReference type="RefSeq" id="WP_003664519.1">
    <property type="nucleotide sequence ID" value="NZ_AZDD01000010.1"/>
</dbReference>
<dbReference type="SMR" id="A5VLH4"/>
<dbReference type="STRING" id="557436.Lreu_1452"/>
<dbReference type="KEGG" id="lre:Lreu_1452"/>
<dbReference type="PATRIC" id="fig|557436.17.peg.171"/>
<dbReference type="eggNOG" id="COG0101">
    <property type="taxonomic scope" value="Bacteria"/>
</dbReference>
<dbReference type="HOGENOM" id="CLU_014673_0_1_9"/>
<dbReference type="Proteomes" id="UP000001991">
    <property type="component" value="Chromosome"/>
</dbReference>
<dbReference type="GO" id="GO:0003723">
    <property type="term" value="F:RNA binding"/>
    <property type="evidence" value="ECO:0007669"/>
    <property type="project" value="InterPro"/>
</dbReference>
<dbReference type="GO" id="GO:0160147">
    <property type="term" value="F:tRNA pseudouridine(38-40) synthase activity"/>
    <property type="evidence" value="ECO:0007669"/>
    <property type="project" value="UniProtKB-EC"/>
</dbReference>
<dbReference type="GO" id="GO:0031119">
    <property type="term" value="P:tRNA pseudouridine synthesis"/>
    <property type="evidence" value="ECO:0007669"/>
    <property type="project" value="UniProtKB-UniRule"/>
</dbReference>
<dbReference type="CDD" id="cd02570">
    <property type="entry name" value="PseudoU_synth_EcTruA"/>
    <property type="match status" value="1"/>
</dbReference>
<dbReference type="FunFam" id="3.30.70.580:FF:000001">
    <property type="entry name" value="tRNA pseudouridine synthase A"/>
    <property type="match status" value="1"/>
</dbReference>
<dbReference type="Gene3D" id="3.30.70.660">
    <property type="entry name" value="Pseudouridine synthase I, catalytic domain, C-terminal subdomain"/>
    <property type="match status" value="1"/>
</dbReference>
<dbReference type="Gene3D" id="3.30.70.580">
    <property type="entry name" value="Pseudouridine synthase I, catalytic domain, N-terminal subdomain"/>
    <property type="match status" value="1"/>
</dbReference>
<dbReference type="HAMAP" id="MF_00171">
    <property type="entry name" value="TruA"/>
    <property type="match status" value="1"/>
</dbReference>
<dbReference type="InterPro" id="IPR020103">
    <property type="entry name" value="PsdUridine_synth_cat_dom_sf"/>
</dbReference>
<dbReference type="InterPro" id="IPR001406">
    <property type="entry name" value="PsdUridine_synth_TruA"/>
</dbReference>
<dbReference type="InterPro" id="IPR020097">
    <property type="entry name" value="PsdUridine_synth_TruA_a/b_dom"/>
</dbReference>
<dbReference type="InterPro" id="IPR020095">
    <property type="entry name" value="PsdUridine_synth_TruA_C"/>
</dbReference>
<dbReference type="InterPro" id="IPR020094">
    <property type="entry name" value="TruA/RsuA/RluB/E/F_N"/>
</dbReference>
<dbReference type="NCBIfam" id="TIGR00071">
    <property type="entry name" value="hisT_truA"/>
    <property type="match status" value="1"/>
</dbReference>
<dbReference type="PANTHER" id="PTHR11142">
    <property type="entry name" value="PSEUDOURIDYLATE SYNTHASE"/>
    <property type="match status" value="1"/>
</dbReference>
<dbReference type="PANTHER" id="PTHR11142:SF0">
    <property type="entry name" value="TRNA PSEUDOURIDINE SYNTHASE-LIKE 1"/>
    <property type="match status" value="1"/>
</dbReference>
<dbReference type="Pfam" id="PF01416">
    <property type="entry name" value="PseudoU_synth_1"/>
    <property type="match status" value="2"/>
</dbReference>
<dbReference type="PIRSF" id="PIRSF001430">
    <property type="entry name" value="tRNA_psdUrid_synth"/>
    <property type="match status" value="1"/>
</dbReference>
<dbReference type="SUPFAM" id="SSF55120">
    <property type="entry name" value="Pseudouridine synthase"/>
    <property type="match status" value="1"/>
</dbReference>
<name>TRUA_LIMRD</name>
<gene>
    <name evidence="1" type="primary">truA</name>
    <name type="ordered locus">Lreu_1452</name>
</gene>
<keyword id="KW-0413">Isomerase</keyword>
<keyword id="KW-1185">Reference proteome</keyword>
<keyword id="KW-0819">tRNA processing</keyword>
<organism>
    <name type="scientific">Limosilactobacillus reuteri (strain DSM 20016)</name>
    <name type="common">Lactobacillus reuteri</name>
    <dbReference type="NCBI Taxonomy" id="557436"/>
    <lineage>
        <taxon>Bacteria</taxon>
        <taxon>Bacillati</taxon>
        <taxon>Bacillota</taxon>
        <taxon>Bacilli</taxon>
        <taxon>Lactobacillales</taxon>
        <taxon>Lactobacillaceae</taxon>
        <taxon>Limosilactobacillus</taxon>
    </lineage>
</organism>
<sequence length="256" mass="29138">MYRYKITFAYDGTNFSGFQIQPNKRTVEQTLKNAVNKIAKHPTPAIPVIGSGRTDAGVHALNQVAHFDIPYHLSNESMRKALNSILPLDILIKKAELVDNDFHARYSAHRKTYRYRVDQGEFVNPFKRNYTSHFKYPLNLEKMRKAADDLVGTHDFTSFVASGSQAKSNVRTIENITIKRDEVRNEVVFDFTGNGFLYNQVRIMVAFLLEIGSNQRPVDDVSRVLKAKDRTLARMTAPASGLYLVNVDYGTNDEKD</sequence>
<feature type="chain" id="PRO_1000058308" description="tRNA pseudouridine synthase A">
    <location>
        <begin position="1"/>
        <end position="256"/>
    </location>
</feature>
<feature type="active site" description="Nucleophile" evidence="1">
    <location>
        <position position="55"/>
    </location>
</feature>
<feature type="binding site" evidence="1">
    <location>
        <position position="113"/>
    </location>
    <ligand>
        <name>substrate</name>
    </ligand>
</feature>
<accession>A5VLH4</accession>
<protein>
    <recommendedName>
        <fullName evidence="1">tRNA pseudouridine synthase A</fullName>
        <ecNumber evidence="1">5.4.99.12</ecNumber>
    </recommendedName>
    <alternativeName>
        <fullName evidence="1">tRNA pseudouridine(38-40) synthase</fullName>
    </alternativeName>
    <alternativeName>
        <fullName evidence="1">tRNA pseudouridylate synthase I</fullName>
    </alternativeName>
    <alternativeName>
        <fullName evidence="1">tRNA-uridine isomerase I</fullName>
    </alternativeName>
</protein>
<evidence type="ECO:0000255" key="1">
    <source>
        <dbReference type="HAMAP-Rule" id="MF_00171"/>
    </source>
</evidence>